<proteinExistence type="evidence at protein level"/>
<organism>
    <name type="scientific">Latrodectus hesperus</name>
    <name type="common">Western black widow spider</name>
    <dbReference type="NCBI Taxonomy" id="256737"/>
    <lineage>
        <taxon>Eukaryota</taxon>
        <taxon>Metazoa</taxon>
        <taxon>Ecdysozoa</taxon>
        <taxon>Arthropoda</taxon>
        <taxon>Chelicerata</taxon>
        <taxon>Arachnida</taxon>
        <taxon>Araneae</taxon>
        <taxon>Araneomorphae</taxon>
        <taxon>Entelegynae</taxon>
        <taxon>Araneoidea</taxon>
        <taxon>Theridiidae</taxon>
        <taxon>Latrodectus</taxon>
    </lineage>
</organism>
<feature type="chain" id="PRO_0000415936" description="Delta-latroinsectotoxin-Lhe1a">
    <location>
        <begin position="1" status="less than"/>
        <end position="147" status="greater than"/>
    </location>
</feature>
<feature type="repeat" description="ANK 7" evidence="4 7">
    <location>
        <begin position="57" status="less than"/>
        <end position="59"/>
    </location>
</feature>
<feature type="repeat" description="ANK 8" evidence="4 7">
    <location>
        <begin position="66"/>
        <end position="78" status="greater than"/>
    </location>
</feature>
<feature type="repeat" description="ANK 10" evidence="4 7">
    <location>
        <begin position="79" status="less than"/>
        <end position="96"/>
    </location>
</feature>
<feature type="repeat" description="ANK 14" evidence="4 7">
    <location>
        <begin position="98" status="less than"/>
        <end position="125"/>
    </location>
</feature>
<feature type="non-consecutive residues" evidence="7">
    <location>
        <begin position="25"/>
        <end position="26"/>
    </location>
</feature>
<feature type="non-consecutive residues" evidence="7">
    <location>
        <begin position="56"/>
        <end position="57"/>
    </location>
</feature>
<feature type="non-consecutive residues" evidence="7">
    <location>
        <begin position="78"/>
        <end position="79"/>
    </location>
</feature>
<feature type="non-consecutive residues" evidence="7">
    <location>
        <begin position="97"/>
        <end position="98"/>
    </location>
</feature>
<feature type="non-terminal residue">
    <location>
        <position position="1"/>
    </location>
</feature>
<feature type="non-terminal residue">
    <location>
        <position position="147"/>
    </location>
</feature>
<keyword id="KW-0040">ANK repeat</keyword>
<keyword id="KW-0165">Cleavage on pair of basic residues</keyword>
<keyword id="KW-0903">Direct protein sequencing</keyword>
<keyword id="KW-0268">Exocytosis</keyword>
<keyword id="KW-0472">Membrane</keyword>
<keyword id="KW-0528">Neurotoxin</keyword>
<keyword id="KW-0638">Presynaptic neurotoxin</keyword>
<keyword id="KW-0677">Repeat</keyword>
<keyword id="KW-0964">Secreted</keyword>
<keyword id="KW-1052">Target cell membrane</keyword>
<keyword id="KW-1053">Target membrane</keyword>
<keyword id="KW-0800">Toxin</keyword>
<keyword id="KW-0812">Transmembrane</keyword>
<protein>
    <recommendedName>
        <fullName evidence="7">Delta-latroinsectotoxin-Lhe1a</fullName>
        <shortName evidence="7">Delta-LIT-Lhe1a</shortName>
    </recommendedName>
    <alternativeName>
        <fullName evidence="6">Delta-latroinsectotoxin</fullName>
        <shortName evidence="6">Delta-LIT</shortName>
    </alternativeName>
</protein>
<evidence type="ECO:0000250" key="1">
    <source>
        <dbReference type="UniProtKB" id="P23631"/>
    </source>
</evidence>
<evidence type="ECO:0000250" key="2">
    <source>
        <dbReference type="UniProtKB" id="Q25338"/>
    </source>
</evidence>
<evidence type="ECO:0000250" key="3">
    <source>
        <dbReference type="UniProtKB" id="Q9XZC0"/>
    </source>
</evidence>
<evidence type="ECO:0000255" key="4"/>
<evidence type="ECO:0000269" key="5">
    <source>
    </source>
</evidence>
<evidence type="ECO:0000303" key="6">
    <source>
    </source>
</evidence>
<evidence type="ECO:0000305" key="7"/>
<evidence type="ECO:0000305" key="8">
    <source>
    </source>
</evidence>
<reference key="1">
    <citation type="journal article" date="2012" name="Biochem. Pharmacol.">
        <title>Cloning and activity of a novel alpha-latrotoxin from red-back spider venom.</title>
        <authorList>
            <person name="Graudins A."/>
            <person name="Little M.J."/>
            <person name="Pineda S.S."/>
            <person name="Hains P.G."/>
            <person name="King G.F."/>
            <person name="Broady K.W."/>
            <person name="Nicholson G.M."/>
        </authorList>
    </citation>
    <scope>PROTEIN SEQUENCE</scope>
    <scope>IDENTIFICATION BY MASS SPECTROMETRY</scope>
    <scope>SUBCELLULAR LOCATION</scope>
    <source>
        <tissue>Venom</tissue>
    </source>
</reference>
<dbReference type="SMR" id="P0DJE7"/>
<dbReference type="GO" id="GO:0005576">
    <property type="term" value="C:extracellular region"/>
    <property type="evidence" value="ECO:0007669"/>
    <property type="project" value="UniProtKB-SubCell"/>
</dbReference>
<dbReference type="GO" id="GO:0044231">
    <property type="term" value="C:host cell presynaptic membrane"/>
    <property type="evidence" value="ECO:0007669"/>
    <property type="project" value="UniProtKB-KW"/>
</dbReference>
<dbReference type="GO" id="GO:0016020">
    <property type="term" value="C:membrane"/>
    <property type="evidence" value="ECO:0007669"/>
    <property type="project" value="UniProtKB-KW"/>
</dbReference>
<dbReference type="GO" id="GO:0044218">
    <property type="term" value="C:other organism cell membrane"/>
    <property type="evidence" value="ECO:0007669"/>
    <property type="project" value="UniProtKB-KW"/>
</dbReference>
<dbReference type="GO" id="GO:0003968">
    <property type="term" value="F:RNA-directed RNA polymerase activity"/>
    <property type="evidence" value="ECO:0007669"/>
    <property type="project" value="InterPro"/>
</dbReference>
<dbReference type="GO" id="GO:0090729">
    <property type="term" value="F:toxin activity"/>
    <property type="evidence" value="ECO:0007669"/>
    <property type="project" value="UniProtKB-KW"/>
</dbReference>
<dbReference type="GO" id="GO:0006887">
    <property type="term" value="P:exocytosis"/>
    <property type="evidence" value="ECO:0007669"/>
    <property type="project" value="UniProtKB-KW"/>
</dbReference>
<dbReference type="GO" id="GO:0039694">
    <property type="term" value="P:viral RNA genome replication"/>
    <property type="evidence" value="ECO:0007669"/>
    <property type="project" value="InterPro"/>
</dbReference>
<dbReference type="Gene3D" id="1.25.40.20">
    <property type="entry name" value="Ankyrin repeat-containing domain"/>
    <property type="match status" value="1"/>
</dbReference>
<dbReference type="InterPro" id="IPR036770">
    <property type="entry name" value="Ankyrin_rpt-contain_sf"/>
</dbReference>
<dbReference type="InterPro" id="IPR007094">
    <property type="entry name" value="RNA-dir_pol_PSvirus"/>
</dbReference>
<dbReference type="SUPFAM" id="SSF48403">
    <property type="entry name" value="Ankyrin repeat"/>
    <property type="match status" value="1"/>
</dbReference>
<comment type="function">
    <text evidence="1 2">Insecticidal presynaptic neurotoxin that induces massive neurotransmitter release at insect (but not vertebrate) neuromuscular junctions. Native toxin forms cation-permeable pores (with high permeability to calcium) in lipid membranes locust muscle membrane and artificial lipid bilayers (By similarity). May bind to insect neurexin-1 homolog, insect adhesion G protein-coupled receptor L1 homolog, and insect receptor-type tyrosine-protein phosphatase S homolog, and induces neurotransmitter exocytosis both by forming tetrameric pores in membranes and signaling via G protein-coupled receptor (By similarity). Oligomerization is a process independent of divalent cations (By similarity).</text>
</comment>
<comment type="subunit">
    <text evidence="2">Homotetramer in membrane.</text>
</comment>
<comment type="subcellular location">
    <subcellularLocation>
        <location evidence="5">Secreted</location>
    </subcellularLocation>
    <subcellularLocation>
        <location evidence="2">Target cell membrane</location>
    </subcellularLocation>
    <text evidence="2">Forms a membrane channel in the prey.</text>
</comment>
<comment type="tissue specificity">
    <text evidence="8">Expressed by the venom gland.</text>
</comment>
<comment type="domain">
    <text evidence="3">Two helices (H2 and H8) are predicted to insert into membranes and form pores by assembling into tetramers. The helices are contained within a helical bundle domain that undergoes significant conformational changes during pore formation to allow exposure of the transmembrane helices and transition of the toxin from a soluble monomer to a transmembrane tetramer.</text>
</comment>
<comment type="miscellaneous">
    <text>Iso and Leu residues are assigned by comparison with orthologs.</text>
</comment>
<comment type="similarity">
    <text evidence="7">Belongs to the cationic peptide 01 (latrotoxin) family. 04 (delta-latroinsectotoxin) subfamily.</text>
</comment>
<accession>P0DJE7</accession>
<name>LITD_LATHE</name>
<sequence>EPSGNSLSSALNELLDKNNNYAIPKVAIIFDDFKSSLTGGDDGLIDNVIEVLNTVKVSINSVTENNNWTPLHFAIYFKKNPAVSAVLILENKDIEARTSIMLIVQKLLLELYNYFINNYAETLDEEALFNRLDEQGKLELALIMHNK</sequence>